<accession>Q5N0K5</accession>
<evidence type="ECO:0000255" key="1">
    <source>
        <dbReference type="HAMAP-Rule" id="MF_00120"/>
    </source>
</evidence>
<gene>
    <name evidence="1" type="primary">gatA</name>
    <name type="ordered locus">syc1975_d</name>
</gene>
<protein>
    <recommendedName>
        <fullName evidence="1">Glutamyl-tRNA(Gln) amidotransferase subunit A</fullName>
        <shortName evidence="1">Glu-ADT subunit A</shortName>
        <ecNumber evidence="1">6.3.5.7</ecNumber>
    </recommendedName>
</protein>
<dbReference type="EC" id="6.3.5.7" evidence="1"/>
<dbReference type="EMBL" id="AP008231">
    <property type="protein sequence ID" value="BAD80165.1"/>
    <property type="molecule type" value="Genomic_DNA"/>
</dbReference>
<dbReference type="RefSeq" id="WP_011244285.1">
    <property type="nucleotide sequence ID" value="NC_006576.1"/>
</dbReference>
<dbReference type="SMR" id="Q5N0K5"/>
<dbReference type="KEGG" id="syc:syc1975_d"/>
<dbReference type="eggNOG" id="COG0154">
    <property type="taxonomic scope" value="Bacteria"/>
</dbReference>
<dbReference type="Proteomes" id="UP000001175">
    <property type="component" value="Chromosome"/>
</dbReference>
<dbReference type="GO" id="GO:0030956">
    <property type="term" value="C:glutamyl-tRNA(Gln) amidotransferase complex"/>
    <property type="evidence" value="ECO:0007669"/>
    <property type="project" value="InterPro"/>
</dbReference>
<dbReference type="GO" id="GO:0005524">
    <property type="term" value="F:ATP binding"/>
    <property type="evidence" value="ECO:0007669"/>
    <property type="project" value="UniProtKB-KW"/>
</dbReference>
<dbReference type="GO" id="GO:0050567">
    <property type="term" value="F:glutaminyl-tRNA synthase (glutamine-hydrolyzing) activity"/>
    <property type="evidence" value="ECO:0007669"/>
    <property type="project" value="UniProtKB-UniRule"/>
</dbReference>
<dbReference type="GO" id="GO:0006412">
    <property type="term" value="P:translation"/>
    <property type="evidence" value="ECO:0007669"/>
    <property type="project" value="UniProtKB-UniRule"/>
</dbReference>
<dbReference type="Gene3D" id="3.90.1300.10">
    <property type="entry name" value="Amidase signature (AS) domain"/>
    <property type="match status" value="1"/>
</dbReference>
<dbReference type="HAMAP" id="MF_00120">
    <property type="entry name" value="GatA"/>
    <property type="match status" value="1"/>
</dbReference>
<dbReference type="InterPro" id="IPR000120">
    <property type="entry name" value="Amidase"/>
</dbReference>
<dbReference type="InterPro" id="IPR020556">
    <property type="entry name" value="Amidase_CS"/>
</dbReference>
<dbReference type="InterPro" id="IPR023631">
    <property type="entry name" value="Amidase_dom"/>
</dbReference>
<dbReference type="InterPro" id="IPR036928">
    <property type="entry name" value="AS_sf"/>
</dbReference>
<dbReference type="InterPro" id="IPR004412">
    <property type="entry name" value="GatA"/>
</dbReference>
<dbReference type="NCBIfam" id="TIGR00132">
    <property type="entry name" value="gatA"/>
    <property type="match status" value="1"/>
</dbReference>
<dbReference type="PANTHER" id="PTHR11895:SF151">
    <property type="entry name" value="GLUTAMYL-TRNA(GLN) AMIDOTRANSFERASE SUBUNIT A"/>
    <property type="match status" value="1"/>
</dbReference>
<dbReference type="PANTHER" id="PTHR11895">
    <property type="entry name" value="TRANSAMIDASE"/>
    <property type="match status" value="1"/>
</dbReference>
<dbReference type="Pfam" id="PF01425">
    <property type="entry name" value="Amidase"/>
    <property type="match status" value="1"/>
</dbReference>
<dbReference type="SUPFAM" id="SSF75304">
    <property type="entry name" value="Amidase signature (AS) enzymes"/>
    <property type="match status" value="1"/>
</dbReference>
<dbReference type="PROSITE" id="PS00571">
    <property type="entry name" value="AMIDASES"/>
    <property type="match status" value="1"/>
</dbReference>
<organism>
    <name type="scientific">Synechococcus sp. (strain ATCC 27144 / PCC 6301 / SAUG 1402/1)</name>
    <name type="common">Anacystis nidulans</name>
    <dbReference type="NCBI Taxonomy" id="269084"/>
    <lineage>
        <taxon>Bacteria</taxon>
        <taxon>Bacillati</taxon>
        <taxon>Cyanobacteriota</taxon>
        <taxon>Cyanophyceae</taxon>
        <taxon>Synechococcales</taxon>
        <taxon>Synechococcaceae</taxon>
        <taxon>Synechococcus</taxon>
    </lineage>
</organism>
<feature type="chain" id="PRO_0000241166" description="Glutamyl-tRNA(Gln) amidotransferase subunit A">
    <location>
        <begin position="1"/>
        <end position="479"/>
    </location>
</feature>
<feature type="active site" description="Charge relay system" evidence="1">
    <location>
        <position position="75"/>
    </location>
</feature>
<feature type="active site" description="Charge relay system" evidence="1">
    <location>
        <position position="150"/>
    </location>
</feature>
<feature type="active site" description="Acyl-ester intermediate" evidence="1">
    <location>
        <position position="174"/>
    </location>
</feature>
<keyword id="KW-0067">ATP-binding</keyword>
<keyword id="KW-0436">Ligase</keyword>
<keyword id="KW-0547">Nucleotide-binding</keyword>
<keyword id="KW-0648">Protein biosynthesis</keyword>
<sequence>MASIRELHSQLVRKERSAVEIAEAALQRIETLEPQLKSFLHVTADQAIAQAKAVDQRIAAGEEISLLAGIPIGIKDNLCTRGIPTTCASKILQGFVPPYESTVTQRLAEAGAVAVGKTNLDEFAVGSSTENSAYQTTANPWDLTRVPGGSSGGSAAAVAADECVVALGSDTGGSIRQPAAFCGVVGLKPTYGLVSRYGLVAYASSLDQIGPFSRSVEDTAILLGAIAGHDPKDATSLKVEVPDYTQFLKPSLAGIKVGVITETVTDSPAGQAMQAALEVLQGLGAEIREISCPRFAYGLPAYYIIAPSEASANLARYDGVKYGYRVEEAETLIDMYCRTRAEGFGSEVKRRIMIGTYALSAGYYDAYYLKAQKVRTLIKQDFEAAFAEVDVLVSPTTPTTAFKAGEKTADPLSMYLSDLMTIPVNSAGLPGLSLPCGFDEAGLPYGLQIIGNVLREDQVLHTAYAYEQATEWHLRQPAL</sequence>
<reference key="1">
    <citation type="journal article" date="2007" name="Photosyn. Res.">
        <title>Complete nucleotide sequence of the freshwater unicellular cyanobacterium Synechococcus elongatus PCC 6301 chromosome: gene content and organization.</title>
        <authorList>
            <person name="Sugita C."/>
            <person name="Ogata K."/>
            <person name="Shikata M."/>
            <person name="Jikuya H."/>
            <person name="Takano J."/>
            <person name="Furumichi M."/>
            <person name="Kanehisa M."/>
            <person name="Omata T."/>
            <person name="Sugiura M."/>
            <person name="Sugita M."/>
        </authorList>
    </citation>
    <scope>NUCLEOTIDE SEQUENCE [LARGE SCALE GENOMIC DNA]</scope>
    <source>
        <strain>ATCC 27144 / PCC 6301 / SAUG 1402/1</strain>
    </source>
</reference>
<proteinExistence type="inferred from homology"/>
<name>GATA_SYNP6</name>
<comment type="function">
    <text evidence="1">Allows the formation of correctly charged Gln-tRNA(Gln) through the transamidation of misacylated Glu-tRNA(Gln) in organisms which lack glutaminyl-tRNA synthetase. The reaction takes place in the presence of glutamine and ATP through an activated gamma-phospho-Glu-tRNA(Gln).</text>
</comment>
<comment type="catalytic activity">
    <reaction evidence="1">
        <text>L-glutamyl-tRNA(Gln) + L-glutamine + ATP + H2O = L-glutaminyl-tRNA(Gln) + L-glutamate + ADP + phosphate + H(+)</text>
        <dbReference type="Rhea" id="RHEA:17521"/>
        <dbReference type="Rhea" id="RHEA-COMP:9681"/>
        <dbReference type="Rhea" id="RHEA-COMP:9684"/>
        <dbReference type="ChEBI" id="CHEBI:15377"/>
        <dbReference type="ChEBI" id="CHEBI:15378"/>
        <dbReference type="ChEBI" id="CHEBI:29985"/>
        <dbReference type="ChEBI" id="CHEBI:30616"/>
        <dbReference type="ChEBI" id="CHEBI:43474"/>
        <dbReference type="ChEBI" id="CHEBI:58359"/>
        <dbReference type="ChEBI" id="CHEBI:78520"/>
        <dbReference type="ChEBI" id="CHEBI:78521"/>
        <dbReference type="ChEBI" id="CHEBI:456216"/>
        <dbReference type="EC" id="6.3.5.7"/>
    </reaction>
</comment>
<comment type="subunit">
    <text evidence="1">Heterotrimer of A, B and C subunits.</text>
</comment>
<comment type="similarity">
    <text evidence="1">Belongs to the amidase family. GatA subfamily.</text>
</comment>